<feature type="transit peptide" description="Mitochondrion" evidence="5">
    <location>
        <begin position="1"/>
        <end position="58"/>
    </location>
</feature>
<feature type="chain" id="PRO_0000431748" description="Succinate dehydrogenase subunit 3-2, mitochondrial" evidence="5">
    <location>
        <begin position="59"/>
        <end position="129"/>
    </location>
</feature>
<feature type="transmembrane region" description="Helical" evidence="2">
    <location>
        <begin position="105"/>
        <end position="127"/>
    </location>
</feature>
<feature type="region of interest" description="Disordered" evidence="3">
    <location>
        <begin position="27"/>
        <end position="66"/>
    </location>
</feature>
<feature type="compositionally biased region" description="Polar residues" evidence="3">
    <location>
        <begin position="27"/>
        <end position="53"/>
    </location>
</feature>
<feature type="binding site" description="axial binding residue" evidence="1">
    <location>
        <position position="87"/>
    </location>
    <ligand>
        <name>heme</name>
        <dbReference type="ChEBI" id="CHEBI:30413"/>
        <note>ligand shared with second transmembrane subunit</note>
    </ligand>
    <ligandPart>
        <name>Fe</name>
        <dbReference type="ChEBI" id="CHEBI:18248"/>
    </ligandPart>
</feature>
<gene>
    <name evidence="5" type="primary">SDH3-2</name>
    <name evidence="7" type="ordered locus">Os07g0521000</name>
    <name evidence="5" type="ordered locus">LOC_Os07g33680</name>
    <name evidence="6" type="ORF">OJ1657_A07.107</name>
    <name evidence="8" type="ORF">OsJ_24481</name>
</gene>
<keyword id="KW-0249">Electron transport</keyword>
<keyword id="KW-0349">Heme</keyword>
<keyword id="KW-0408">Iron</keyword>
<keyword id="KW-0472">Membrane</keyword>
<keyword id="KW-0479">Metal-binding</keyword>
<keyword id="KW-0496">Mitochondrion</keyword>
<keyword id="KW-0999">Mitochondrion inner membrane</keyword>
<keyword id="KW-1185">Reference proteome</keyword>
<keyword id="KW-0809">Transit peptide</keyword>
<keyword id="KW-0812">Transmembrane</keyword>
<keyword id="KW-1133">Transmembrane helix</keyword>
<keyword id="KW-0813">Transport</keyword>
<keyword id="KW-0816">Tricarboxylic acid cycle</keyword>
<name>SDH32_ORYSJ</name>
<organism evidence="9">
    <name type="scientific">Oryza sativa subsp. japonica</name>
    <name type="common">Rice</name>
    <dbReference type="NCBI Taxonomy" id="39947"/>
    <lineage>
        <taxon>Eukaryota</taxon>
        <taxon>Viridiplantae</taxon>
        <taxon>Streptophyta</taxon>
        <taxon>Embryophyta</taxon>
        <taxon>Tracheophyta</taxon>
        <taxon>Spermatophyta</taxon>
        <taxon>Magnoliopsida</taxon>
        <taxon>Liliopsida</taxon>
        <taxon>Poales</taxon>
        <taxon>Poaceae</taxon>
        <taxon>BOP clade</taxon>
        <taxon>Oryzoideae</taxon>
        <taxon>Oryzeae</taxon>
        <taxon>Oryzinae</taxon>
        <taxon>Oryza</taxon>
        <taxon>Oryza sativa</taxon>
    </lineage>
</organism>
<protein>
    <recommendedName>
        <fullName evidence="5">Succinate dehydrogenase subunit 3-2, mitochondrial</fullName>
    </recommendedName>
</protein>
<sequence>MEKYQSKARFAPLSDAPFALRGALGSSNSSFNNIDHLRQSSSSGQARSYTSSPLGALRPKMFPSGNRLLHTSRPLSAPVANRPLSPHLPLKKPQLSATFSISHRIFGAALGAVIISIPLATKFSLMFDV</sequence>
<accession>Q84VK7</accession>
<accession>A0A0P0X6P4</accession>
<accession>Q94FP1</accession>
<reference key="1">
    <citation type="journal article" date="2001" name="Genetics">
        <title>Multiple losses and transfers to the nucleus of two mitochondrial succinate dehydrogenase genes during angiosperm evolution.</title>
        <authorList>
            <person name="Adams K.L."/>
            <person name="Rosenblueth M."/>
            <person name="Qiu Y.L."/>
            <person name="Palmer J.D."/>
        </authorList>
    </citation>
    <scope>NUCLEOTIDE SEQUENCE [GENOMIC DNA]</scope>
</reference>
<reference key="2">
    <citation type="journal article" date="2005" name="Nature">
        <title>The map-based sequence of the rice genome.</title>
        <authorList>
            <consortium name="International rice genome sequencing project (IRGSP)"/>
        </authorList>
    </citation>
    <scope>NUCLEOTIDE SEQUENCE [LARGE SCALE GENOMIC DNA]</scope>
    <source>
        <strain>cv. Nipponbare</strain>
    </source>
</reference>
<reference key="3">
    <citation type="journal article" date="2008" name="Nucleic Acids Res.">
        <title>The rice annotation project database (RAP-DB): 2008 update.</title>
        <authorList>
            <consortium name="The rice annotation project (RAP)"/>
        </authorList>
    </citation>
    <scope>GENOME REANNOTATION</scope>
    <source>
        <strain>cv. Nipponbare</strain>
    </source>
</reference>
<reference key="4">
    <citation type="journal article" date="2013" name="Rice">
        <title>Improvement of the Oryza sativa Nipponbare reference genome using next generation sequence and optical map data.</title>
        <authorList>
            <person name="Kawahara Y."/>
            <person name="de la Bastide M."/>
            <person name="Hamilton J.P."/>
            <person name="Kanamori H."/>
            <person name="McCombie W.R."/>
            <person name="Ouyang S."/>
            <person name="Schwartz D.C."/>
            <person name="Tanaka T."/>
            <person name="Wu J."/>
            <person name="Zhou S."/>
            <person name="Childs K.L."/>
            <person name="Davidson R.M."/>
            <person name="Lin H."/>
            <person name="Quesada-Ocampo L."/>
            <person name="Vaillancourt B."/>
            <person name="Sakai H."/>
            <person name="Lee S.S."/>
            <person name="Kim J."/>
            <person name="Numa H."/>
            <person name="Itoh T."/>
            <person name="Buell C.R."/>
            <person name="Matsumoto T."/>
        </authorList>
    </citation>
    <scope>GENOME REANNOTATION</scope>
    <source>
        <strain>cv. Nipponbare</strain>
    </source>
</reference>
<reference key="5">
    <citation type="journal article" date="2005" name="PLoS Biol.">
        <title>The genomes of Oryza sativa: a history of duplications.</title>
        <authorList>
            <person name="Yu J."/>
            <person name="Wang J."/>
            <person name="Lin W."/>
            <person name="Li S."/>
            <person name="Li H."/>
            <person name="Zhou J."/>
            <person name="Ni P."/>
            <person name="Dong W."/>
            <person name="Hu S."/>
            <person name="Zeng C."/>
            <person name="Zhang J."/>
            <person name="Zhang Y."/>
            <person name="Li R."/>
            <person name="Xu Z."/>
            <person name="Li S."/>
            <person name="Li X."/>
            <person name="Zheng H."/>
            <person name="Cong L."/>
            <person name="Lin L."/>
            <person name="Yin J."/>
            <person name="Geng J."/>
            <person name="Li G."/>
            <person name="Shi J."/>
            <person name="Liu J."/>
            <person name="Lv H."/>
            <person name="Li J."/>
            <person name="Wang J."/>
            <person name="Deng Y."/>
            <person name="Ran L."/>
            <person name="Shi X."/>
            <person name="Wang X."/>
            <person name="Wu Q."/>
            <person name="Li C."/>
            <person name="Ren X."/>
            <person name="Wang J."/>
            <person name="Wang X."/>
            <person name="Li D."/>
            <person name="Liu D."/>
            <person name="Zhang X."/>
            <person name="Ji Z."/>
            <person name="Zhao W."/>
            <person name="Sun Y."/>
            <person name="Zhang Z."/>
            <person name="Bao J."/>
            <person name="Han Y."/>
            <person name="Dong L."/>
            <person name="Ji J."/>
            <person name="Chen P."/>
            <person name="Wu S."/>
            <person name="Liu J."/>
            <person name="Xiao Y."/>
            <person name="Bu D."/>
            <person name="Tan J."/>
            <person name="Yang L."/>
            <person name="Ye C."/>
            <person name="Zhang J."/>
            <person name="Xu J."/>
            <person name="Zhou Y."/>
            <person name="Yu Y."/>
            <person name="Zhang B."/>
            <person name="Zhuang S."/>
            <person name="Wei H."/>
            <person name="Liu B."/>
            <person name="Lei M."/>
            <person name="Yu H."/>
            <person name="Li Y."/>
            <person name="Xu H."/>
            <person name="Wei S."/>
            <person name="He X."/>
            <person name="Fang L."/>
            <person name="Zhang Z."/>
            <person name="Zhang Y."/>
            <person name="Huang X."/>
            <person name="Su Z."/>
            <person name="Tong W."/>
            <person name="Li J."/>
            <person name="Tong Z."/>
            <person name="Li S."/>
            <person name="Ye J."/>
            <person name="Wang L."/>
            <person name="Fang L."/>
            <person name="Lei T."/>
            <person name="Chen C.-S."/>
            <person name="Chen H.-C."/>
            <person name="Xu Z."/>
            <person name="Li H."/>
            <person name="Huang H."/>
            <person name="Zhang F."/>
            <person name="Xu H."/>
            <person name="Li N."/>
            <person name="Zhao C."/>
            <person name="Li S."/>
            <person name="Dong L."/>
            <person name="Huang Y."/>
            <person name="Li L."/>
            <person name="Xi Y."/>
            <person name="Qi Q."/>
            <person name="Li W."/>
            <person name="Zhang B."/>
            <person name="Hu W."/>
            <person name="Zhang Y."/>
            <person name="Tian X."/>
            <person name="Jiao Y."/>
            <person name="Liang X."/>
            <person name="Jin J."/>
            <person name="Gao L."/>
            <person name="Zheng W."/>
            <person name="Hao B."/>
            <person name="Liu S.-M."/>
            <person name="Wang W."/>
            <person name="Yuan L."/>
            <person name="Cao M."/>
            <person name="McDermott J."/>
            <person name="Samudrala R."/>
            <person name="Wang J."/>
            <person name="Wong G.K.-S."/>
            <person name="Yang H."/>
        </authorList>
    </citation>
    <scope>NUCLEOTIDE SEQUENCE [LARGE SCALE GENOMIC DNA]</scope>
    <source>
        <strain>cv. Nipponbare</strain>
    </source>
</reference>
<reference key="6">
    <citation type="journal article" date="2003" name="Science">
        <title>Collection, mapping, and annotation of over 28,000 cDNA clones from japonica rice.</title>
        <authorList>
            <consortium name="The rice full-length cDNA consortium"/>
        </authorList>
    </citation>
    <scope>NUCLEOTIDE SEQUENCE [LARGE SCALE MRNA]</scope>
    <source>
        <strain>cv. Nipponbare</strain>
    </source>
</reference>
<reference key="7">
    <citation type="journal article" date="2010" name="Plant Mol. Biol.">
        <title>Functional and composition differences between mitochondrial complex II in Arabidopsis and rice are correlated with the complex genetic history of the enzyme.</title>
        <authorList>
            <person name="Huang S."/>
            <person name="Taylor N.L."/>
            <person name="Narsai R."/>
            <person name="Eubel H."/>
            <person name="Whelan J."/>
            <person name="Millar A.H."/>
        </authorList>
    </citation>
    <scope>SUBUNIT</scope>
</reference>
<comment type="function">
    <text evidence="1">Membrane-anchoring subunit of succinate dehydrogenase (SDH).</text>
</comment>
<comment type="cofactor">
    <cofactor evidence="1">
        <name>heme</name>
        <dbReference type="ChEBI" id="CHEBI:30413"/>
    </cofactor>
</comment>
<comment type="pathway">
    <text evidence="5">Carbohydrate metabolism; tricarboxylic acid cycle.</text>
</comment>
<comment type="subunit">
    <text evidence="4">Component of complex II composed of eight subunits in plants: four classical SDH subunits SDH1, SDH2, SDH3 and SDH4 (a flavoprotein (FP), an iron-sulfur protein (IP), and a cytochrome b composed of a large and a small subunit.), as well as four subunits unknown in mitochondria from bacteria and heterotrophic eukaryotes.</text>
</comment>
<comment type="subcellular location">
    <subcellularLocation>
        <location evidence="5">Mitochondrion inner membrane</location>
        <topology evidence="2">Single-pass membrane protein</topology>
    </subcellularLocation>
</comment>
<dbReference type="EMBL" id="AF362742">
    <property type="protein sequence ID" value="AAK73695.1"/>
    <property type="molecule type" value="Genomic_DNA"/>
</dbReference>
<dbReference type="EMBL" id="AP003930">
    <property type="protein sequence ID" value="BAC83222.1"/>
    <property type="molecule type" value="Genomic_DNA"/>
</dbReference>
<dbReference type="EMBL" id="AP008213">
    <property type="protein sequence ID" value="BAF21720.1"/>
    <property type="molecule type" value="Genomic_DNA"/>
</dbReference>
<dbReference type="EMBL" id="AP014963">
    <property type="protein sequence ID" value="BAT01808.1"/>
    <property type="molecule type" value="Genomic_DNA"/>
</dbReference>
<dbReference type="EMBL" id="CM000144">
    <property type="protein sequence ID" value="EAZ40043.1"/>
    <property type="molecule type" value="Genomic_DNA"/>
</dbReference>
<dbReference type="EMBL" id="AK058482">
    <property type="protein sequence ID" value="BAG86708.1"/>
    <property type="molecule type" value="mRNA"/>
</dbReference>
<dbReference type="RefSeq" id="XP_015647541.1">
    <property type="nucleotide sequence ID" value="XM_015792055.1"/>
</dbReference>
<dbReference type="FunCoup" id="Q84VK7">
    <property type="interactions" value="407"/>
</dbReference>
<dbReference type="STRING" id="39947.Q84VK7"/>
<dbReference type="PaxDb" id="39947-Q84VK7"/>
<dbReference type="EnsemblPlants" id="Os07t0521000-01">
    <property type="protein sequence ID" value="Os07t0521000-01"/>
    <property type="gene ID" value="Os07g0521000"/>
</dbReference>
<dbReference type="Gramene" id="Os07t0521000-01">
    <property type="protein sequence ID" value="Os07t0521000-01"/>
    <property type="gene ID" value="Os07g0521000"/>
</dbReference>
<dbReference type="KEGG" id="dosa:Os07g0521000"/>
<dbReference type="eggNOG" id="ENOG502SSPD">
    <property type="taxonomic scope" value="Eukaryota"/>
</dbReference>
<dbReference type="HOGENOM" id="CLU_112203_1_0_1"/>
<dbReference type="InParanoid" id="Q84VK7"/>
<dbReference type="OMA" id="CNSNTRY"/>
<dbReference type="OrthoDB" id="588261at2759"/>
<dbReference type="PlantReactome" id="R-OSA-1119533">
    <property type="pathway name" value="TCA cycle (plant)"/>
</dbReference>
<dbReference type="UniPathway" id="UPA00223"/>
<dbReference type="Proteomes" id="UP000000763">
    <property type="component" value="Chromosome 7"/>
</dbReference>
<dbReference type="Proteomes" id="UP000007752">
    <property type="component" value="Chromosome 7"/>
</dbReference>
<dbReference type="Proteomes" id="UP000059680">
    <property type="component" value="Chromosome 7"/>
</dbReference>
<dbReference type="GO" id="GO:0005743">
    <property type="term" value="C:mitochondrial inner membrane"/>
    <property type="evidence" value="ECO:0007669"/>
    <property type="project" value="UniProtKB-SubCell"/>
</dbReference>
<dbReference type="GO" id="GO:0045273">
    <property type="term" value="C:respiratory chain complex II (succinate dehydrogenase)"/>
    <property type="evidence" value="ECO:0000314"/>
    <property type="project" value="UniProtKB"/>
</dbReference>
<dbReference type="GO" id="GO:0009055">
    <property type="term" value="F:electron transfer activity"/>
    <property type="evidence" value="ECO:0007669"/>
    <property type="project" value="InterPro"/>
</dbReference>
<dbReference type="GO" id="GO:0046872">
    <property type="term" value="F:metal ion binding"/>
    <property type="evidence" value="ECO:0007669"/>
    <property type="project" value="UniProtKB-KW"/>
</dbReference>
<dbReference type="GO" id="GO:0006121">
    <property type="term" value="P:mitochondrial electron transport, succinate to ubiquinone"/>
    <property type="evidence" value="ECO:0000318"/>
    <property type="project" value="GO_Central"/>
</dbReference>
<dbReference type="GO" id="GO:0006099">
    <property type="term" value="P:tricarboxylic acid cycle"/>
    <property type="evidence" value="ECO:0007669"/>
    <property type="project" value="UniProtKB-UniPathway"/>
</dbReference>
<dbReference type="FunFam" id="1.20.1300.10:FF:000010">
    <property type="entry name" value="Succinate dehydrogenase subunit 3-1, mitochondrial"/>
    <property type="match status" value="1"/>
</dbReference>
<dbReference type="Gene3D" id="1.20.1300.10">
    <property type="entry name" value="Fumarate reductase/succinate dehydrogenase, transmembrane subunit"/>
    <property type="match status" value="1"/>
</dbReference>
<dbReference type="InterPro" id="IPR034804">
    <property type="entry name" value="SQR/QFR_C/D"/>
</dbReference>
<dbReference type="InterPro" id="IPR014314">
    <property type="entry name" value="Succ_DH_cytb556"/>
</dbReference>
<dbReference type="InterPro" id="IPR000701">
    <property type="entry name" value="SuccDH_FuR_B_TM-su"/>
</dbReference>
<dbReference type="PANTHER" id="PTHR10978">
    <property type="entry name" value="SUCCINATE DEHYDROGENASE CYTOCHROME B560 SUBUNIT"/>
    <property type="match status" value="1"/>
</dbReference>
<dbReference type="PANTHER" id="PTHR10978:SF18">
    <property type="entry name" value="SUCCINATE DEHYDROGENASE SUBUNIT 3-1, MITOCHONDRIAL"/>
    <property type="match status" value="1"/>
</dbReference>
<dbReference type="Pfam" id="PF01127">
    <property type="entry name" value="Sdh_cyt"/>
    <property type="match status" value="1"/>
</dbReference>
<dbReference type="SUPFAM" id="SSF81343">
    <property type="entry name" value="Fumarate reductase respiratory complex transmembrane subunits"/>
    <property type="match status" value="1"/>
</dbReference>
<evidence type="ECO:0000250" key="1">
    <source>
        <dbReference type="UniProtKB" id="P69054"/>
    </source>
</evidence>
<evidence type="ECO:0000255" key="2"/>
<evidence type="ECO:0000256" key="3">
    <source>
        <dbReference type="SAM" id="MobiDB-lite"/>
    </source>
</evidence>
<evidence type="ECO:0000269" key="4">
    <source>
    </source>
</evidence>
<evidence type="ECO:0000305" key="5"/>
<evidence type="ECO:0000312" key="6">
    <source>
        <dbReference type="EMBL" id="BAC83222.1"/>
    </source>
</evidence>
<evidence type="ECO:0000312" key="7">
    <source>
        <dbReference type="EMBL" id="BAF21720.1"/>
    </source>
</evidence>
<evidence type="ECO:0000312" key="8">
    <source>
        <dbReference type="EMBL" id="EAZ40043.1"/>
    </source>
</evidence>
<evidence type="ECO:0000312" key="9">
    <source>
        <dbReference type="Proteomes" id="UP000059680"/>
    </source>
</evidence>
<proteinExistence type="evidence at protein level"/>